<proteinExistence type="inferred from homology"/>
<keyword id="KW-0687">Ribonucleoprotein</keyword>
<keyword id="KW-0689">Ribosomal protein</keyword>
<keyword id="KW-0694">RNA-binding</keyword>
<keyword id="KW-0699">rRNA-binding</keyword>
<evidence type="ECO:0000255" key="1">
    <source>
        <dbReference type="HAMAP-Rule" id="MF_01367"/>
    </source>
</evidence>
<evidence type="ECO:0000305" key="2"/>
<feature type="chain" id="PRO_0000128574" description="Large ribosomal subunit protein uL14">
    <location>
        <begin position="1"/>
        <end position="132"/>
    </location>
</feature>
<organism>
    <name type="scientific">Methanococcus vannielii</name>
    <dbReference type="NCBI Taxonomy" id="2187"/>
    <lineage>
        <taxon>Archaea</taxon>
        <taxon>Methanobacteriati</taxon>
        <taxon>Methanobacteriota</taxon>
        <taxon>Methanomada group</taxon>
        <taxon>Methanococci</taxon>
        <taxon>Methanococcales</taxon>
        <taxon>Methanococcaceae</taxon>
        <taxon>Methanococcus</taxon>
    </lineage>
</organism>
<sequence length="132" mass="14205">MKGLGSTIVRSLPNGARLVCADNTGAKELEVIAVKNYSGTVRRLPSAGVGQIVFVSVKKGTPEMRKQVLPAIIIRQKKEYKRADGTRVKFEDNAAVIVTPEGTPKGSDIKGPVSKEAAERWPGVSRLAKIIH</sequence>
<name>RL14_METVA</name>
<accession>P14031</accession>
<dbReference type="EMBL" id="X16720">
    <property type="protein sequence ID" value="CAA34690.1"/>
    <property type="molecule type" value="Genomic_DNA"/>
</dbReference>
<dbReference type="PIR" id="S05614">
    <property type="entry name" value="R5MX14"/>
</dbReference>
<dbReference type="SMR" id="P14031"/>
<dbReference type="OMA" id="MIQMQTR"/>
<dbReference type="GO" id="GO:0022625">
    <property type="term" value="C:cytosolic large ribosomal subunit"/>
    <property type="evidence" value="ECO:0007669"/>
    <property type="project" value="TreeGrafter"/>
</dbReference>
<dbReference type="GO" id="GO:0070180">
    <property type="term" value="F:large ribosomal subunit rRNA binding"/>
    <property type="evidence" value="ECO:0007669"/>
    <property type="project" value="TreeGrafter"/>
</dbReference>
<dbReference type="GO" id="GO:0003735">
    <property type="term" value="F:structural constituent of ribosome"/>
    <property type="evidence" value="ECO:0007669"/>
    <property type="project" value="InterPro"/>
</dbReference>
<dbReference type="GO" id="GO:0006412">
    <property type="term" value="P:translation"/>
    <property type="evidence" value="ECO:0007669"/>
    <property type="project" value="UniProtKB-UniRule"/>
</dbReference>
<dbReference type="CDD" id="cd00337">
    <property type="entry name" value="Ribosomal_uL14"/>
    <property type="match status" value="1"/>
</dbReference>
<dbReference type="FunFam" id="2.40.150.20:FF:000007">
    <property type="entry name" value="50S ribosomal protein L14"/>
    <property type="match status" value="1"/>
</dbReference>
<dbReference type="Gene3D" id="2.40.150.20">
    <property type="entry name" value="Ribosomal protein L14"/>
    <property type="match status" value="1"/>
</dbReference>
<dbReference type="HAMAP" id="MF_01367">
    <property type="entry name" value="Ribosomal_uL14"/>
    <property type="match status" value="1"/>
</dbReference>
<dbReference type="InterPro" id="IPR000218">
    <property type="entry name" value="Ribosomal_uL14"/>
</dbReference>
<dbReference type="InterPro" id="IPR019971">
    <property type="entry name" value="Ribosomal_uL14_arc"/>
</dbReference>
<dbReference type="InterPro" id="IPR019972">
    <property type="entry name" value="Ribosomal_uL14_CS"/>
</dbReference>
<dbReference type="InterPro" id="IPR036853">
    <property type="entry name" value="Ribosomal_uL14_sf"/>
</dbReference>
<dbReference type="NCBIfam" id="NF006344">
    <property type="entry name" value="PRK08571.1"/>
    <property type="match status" value="1"/>
</dbReference>
<dbReference type="NCBIfam" id="TIGR03673">
    <property type="entry name" value="uL14_arch"/>
    <property type="match status" value="1"/>
</dbReference>
<dbReference type="PANTHER" id="PTHR11761">
    <property type="entry name" value="50S/60S RIBOSOMAL PROTEIN L14/L23"/>
    <property type="match status" value="1"/>
</dbReference>
<dbReference type="PANTHER" id="PTHR11761:SF8">
    <property type="entry name" value="LARGE RIBOSOMAL SUBUNIT PROTEIN UL14"/>
    <property type="match status" value="1"/>
</dbReference>
<dbReference type="Pfam" id="PF00238">
    <property type="entry name" value="Ribosomal_L14"/>
    <property type="match status" value="1"/>
</dbReference>
<dbReference type="SMART" id="SM01374">
    <property type="entry name" value="Ribosomal_L14"/>
    <property type="match status" value="1"/>
</dbReference>
<dbReference type="SUPFAM" id="SSF50193">
    <property type="entry name" value="Ribosomal protein L14"/>
    <property type="match status" value="1"/>
</dbReference>
<dbReference type="PROSITE" id="PS00049">
    <property type="entry name" value="RIBOSOMAL_L14"/>
    <property type="match status" value="1"/>
</dbReference>
<gene>
    <name evidence="1" type="primary">rpl14</name>
</gene>
<reference key="1">
    <citation type="journal article" date="1989" name="J. Mol. Biol.">
        <title>Organization and structure of the Methanococcus transcriptional unit homologous to the Escherichia coli 'spectinomycin operon'. Implications for the evolutionary relationship of 70 S and 80 S ribosomes.</title>
        <authorList>
            <person name="Auer J."/>
            <person name="Spicker G."/>
            <person name="Boeck A."/>
        </authorList>
    </citation>
    <scope>NUCLEOTIDE SEQUENCE [GENOMIC DNA]</scope>
</reference>
<comment type="function">
    <text evidence="1">Binds to 23S rRNA. Forms part of two intersubunit bridges in the 70S ribosome.</text>
</comment>
<comment type="subunit">
    <text evidence="1">Part of the 50S ribosomal subunit. Forms a cluster with proteins L3 and L24e, part of which may contact the 16S rRNA in 2 intersubunit bridges.</text>
</comment>
<comment type="similarity">
    <text evidence="1">Belongs to the universal ribosomal protein uL14 family.</text>
</comment>
<protein>
    <recommendedName>
        <fullName evidence="1">Large ribosomal subunit protein uL14</fullName>
    </recommendedName>
    <alternativeName>
        <fullName evidence="2">50S ribosomal protein L14</fullName>
    </alternativeName>
</protein>